<evidence type="ECO:0000255" key="1">
    <source>
        <dbReference type="HAMAP-Rule" id="MF_00059"/>
    </source>
</evidence>
<sequence>MIYQMQMPAKIEVDETTHTDYFGRFVAQPLERGYGVTLGNMMRRVLLASLPGTAITGIKVDGVFHEFSAIEGVREDVPEIVLNLKKVRFRSTCKRSCKTTLTITGPKDFTAGDIVAMEGEFDVLNKDLHIATVNEGSTLNIDVFVGRGRGYTPAEDNRPESMPIGYIAIDAIYTPIRNVKVAVENTRVGQRTDYEKMVLDVETDGSITPDDSISLAGRIINEHVAFFADFSPTEEEFTEEEFKQQDDEFEAMRKLLNTKIEDLDLSVRSHNCLRLAEIDSIGDLVSRKEDELLNYKNFGKKSLTELKEQLEKFELKFGMDITKYQMKG</sequence>
<organism>
    <name type="scientific">Chlorobium phaeovibrioides (strain DSM 265 / 1930)</name>
    <name type="common">Prosthecochloris vibrioformis (strain DSM 265)</name>
    <dbReference type="NCBI Taxonomy" id="290318"/>
    <lineage>
        <taxon>Bacteria</taxon>
        <taxon>Pseudomonadati</taxon>
        <taxon>Chlorobiota</taxon>
        <taxon>Chlorobiia</taxon>
        <taxon>Chlorobiales</taxon>
        <taxon>Chlorobiaceae</taxon>
        <taxon>Chlorobium/Pelodictyon group</taxon>
        <taxon>Chlorobium</taxon>
    </lineage>
</organism>
<gene>
    <name evidence="1" type="primary">rpoA</name>
    <name type="ordered locus">Cvib_0273</name>
</gene>
<reference key="1">
    <citation type="submission" date="2007-03" db="EMBL/GenBank/DDBJ databases">
        <title>Complete sequence of Prosthecochloris vibrioformis DSM 265.</title>
        <authorList>
            <consortium name="US DOE Joint Genome Institute"/>
            <person name="Copeland A."/>
            <person name="Lucas S."/>
            <person name="Lapidus A."/>
            <person name="Barry K."/>
            <person name="Detter J.C."/>
            <person name="Glavina del Rio T."/>
            <person name="Hammon N."/>
            <person name="Israni S."/>
            <person name="Pitluck S."/>
            <person name="Schmutz J."/>
            <person name="Larimer F."/>
            <person name="Land M."/>
            <person name="Hauser L."/>
            <person name="Mikhailova N."/>
            <person name="Li T."/>
            <person name="Overmann J."/>
            <person name="Schuster S.C."/>
            <person name="Bryant D.A."/>
            <person name="Richardson P."/>
        </authorList>
    </citation>
    <scope>NUCLEOTIDE SEQUENCE [LARGE SCALE GENOMIC DNA]</scope>
    <source>
        <strain>DSM 265 / 1930</strain>
    </source>
</reference>
<name>RPOA_CHLPM</name>
<proteinExistence type="inferred from homology"/>
<comment type="function">
    <text evidence="1">DNA-dependent RNA polymerase catalyzes the transcription of DNA into RNA using the four ribonucleoside triphosphates as substrates.</text>
</comment>
<comment type="catalytic activity">
    <reaction evidence="1">
        <text>RNA(n) + a ribonucleoside 5'-triphosphate = RNA(n+1) + diphosphate</text>
        <dbReference type="Rhea" id="RHEA:21248"/>
        <dbReference type="Rhea" id="RHEA-COMP:14527"/>
        <dbReference type="Rhea" id="RHEA-COMP:17342"/>
        <dbReference type="ChEBI" id="CHEBI:33019"/>
        <dbReference type="ChEBI" id="CHEBI:61557"/>
        <dbReference type="ChEBI" id="CHEBI:140395"/>
        <dbReference type="EC" id="2.7.7.6"/>
    </reaction>
</comment>
<comment type="subunit">
    <text evidence="1">Homodimer. The RNAP catalytic core consists of 2 alpha, 1 beta, 1 beta' and 1 omega subunit. When a sigma factor is associated with the core the holoenzyme is formed, which can initiate transcription.</text>
</comment>
<comment type="domain">
    <text evidence="1">The N-terminal domain is essential for RNAP assembly and basal transcription, whereas the C-terminal domain is involved in interaction with transcriptional regulators and with upstream promoter elements.</text>
</comment>
<comment type="similarity">
    <text evidence="1">Belongs to the RNA polymerase alpha chain family.</text>
</comment>
<protein>
    <recommendedName>
        <fullName evidence="1">DNA-directed RNA polymerase subunit alpha</fullName>
        <shortName evidence="1">RNAP subunit alpha</shortName>
        <ecNumber evidence="1">2.7.7.6</ecNumber>
    </recommendedName>
    <alternativeName>
        <fullName evidence="1">RNA polymerase subunit alpha</fullName>
    </alternativeName>
    <alternativeName>
        <fullName evidence="1">Transcriptase subunit alpha</fullName>
    </alternativeName>
</protein>
<feature type="chain" id="PRO_1000075012" description="DNA-directed RNA polymerase subunit alpha">
    <location>
        <begin position="1"/>
        <end position="328"/>
    </location>
</feature>
<feature type="region of interest" description="Alpha N-terminal domain (alpha-NTD)" evidence="1">
    <location>
        <begin position="1"/>
        <end position="231"/>
    </location>
</feature>
<feature type="region of interest" description="Alpha C-terminal domain (alpha-CTD)" evidence="1">
    <location>
        <begin position="252"/>
        <end position="328"/>
    </location>
</feature>
<keyword id="KW-0240">DNA-directed RNA polymerase</keyword>
<keyword id="KW-0548">Nucleotidyltransferase</keyword>
<keyword id="KW-0804">Transcription</keyword>
<keyword id="KW-0808">Transferase</keyword>
<accession>A4SCT6</accession>
<dbReference type="EC" id="2.7.7.6" evidence="1"/>
<dbReference type="EMBL" id="CP000607">
    <property type="protein sequence ID" value="ABP36295.1"/>
    <property type="molecule type" value="Genomic_DNA"/>
</dbReference>
<dbReference type="SMR" id="A4SCT6"/>
<dbReference type="STRING" id="290318.Cvib_0273"/>
<dbReference type="KEGG" id="pvi:Cvib_0273"/>
<dbReference type="eggNOG" id="COG0202">
    <property type="taxonomic scope" value="Bacteria"/>
</dbReference>
<dbReference type="HOGENOM" id="CLU_053084_0_1_10"/>
<dbReference type="OrthoDB" id="9805706at2"/>
<dbReference type="GO" id="GO:0005737">
    <property type="term" value="C:cytoplasm"/>
    <property type="evidence" value="ECO:0007669"/>
    <property type="project" value="UniProtKB-ARBA"/>
</dbReference>
<dbReference type="GO" id="GO:0000428">
    <property type="term" value="C:DNA-directed RNA polymerase complex"/>
    <property type="evidence" value="ECO:0007669"/>
    <property type="project" value="UniProtKB-KW"/>
</dbReference>
<dbReference type="GO" id="GO:0003677">
    <property type="term" value="F:DNA binding"/>
    <property type="evidence" value="ECO:0007669"/>
    <property type="project" value="UniProtKB-UniRule"/>
</dbReference>
<dbReference type="GO" id="GO:0003899">
    <property type="term" value="F:DNA-directed RNA polymerase activity"/>
    <property type="evidence" value="ECO:0007669"/>
    <property type="project" value="UniProtKB-UniRule"/>
</dbReference>
<dbReference type="GO" id="GO:0046983">
    <property type="term" value="F:protein dimerization activity"/>
    <property type="evidence" value="ECO:0007669"/>
    <property type="project" value="InterPro"/>
</dbReference>
<dbReference type="GO" id="GO:0006351">
    <property type="term" value="P:DNA-templated transcription"/>
    <property type="evidence" value="ECO:0007669"/>
    <property type="project" value="UniProtKB-UniRule"/>
</dbReference>
<dbReference type="CDD" id="cd06928">
    <property type="entry name" value="RNAP_alpha_NTD"/>
    <property type="match status" value="1"/>
</dbReference>
<dbReference type="FunFam" id="2.170.120.12:FF:000001">
    <property type="entry name" value="DNA-directed RNA polymerase subunit alpha"/>
    <property type="match status" value="1"/>
</dbReference>
<dbReference type="Gene3D" id="1.10.150.20">
    <property type="entry name" value="5' to 3' exonuclease, C-terminal subdomain"/>
    <property type="match status" value="1"/>
</dbReference>
<dbReference type="Gene3D" id="2.170.120.12">
    <property type="entry name" value="DNA-directed RNA polymerase, insert domain"/>
    <property type="match status" value="1"/>
</dbReference>
<dbReference type="Gene3D" id="3.30.1360.10">
    <property type="entry name" value="RNA polymerase, RBP11-like subunit"/>
    <property type="match status" value="1"/>
</dbReference>
<dbReference type="HAMAP" id="MF_00059">
    <property type="entry name" value="RNApol_bact_RpoA"/>
    <property type="match status" value="1"/>
</dbReference>
<dbReference type="InterPro" id="IPR011262">
    <property type="entry name" value="DNA-dir_RNA_pol_insert"/>
</dbReference>
<dbReference type="InterPro" id="IPR011263">
    <property type="entry name" value="DNA-dir_RNA_pol_RpoA/D/Rpb3"/>
</dbReference>
<dbReference type="InterPro" id="IPR011773">
    <property type="entry name" value="DNA-dir_RpoA"/>
</dbReference>
<dbReference type="InterPro" id="IPR036603">
    <property type="entry name" value="RBP11-like"/>
</dbReference>
<dbReference type="InterPro" id="IPR011260">
    <property type="entry name" value="RNAP_asu_C"/>
</dbReference>
<dbReference type="InterPro" id="IPR036643">
    <property type="entry name" value="RNApol_insert_sf"/>
</dbReference>
<dbReference type="NCBIfam" id="NF003513">
    <property type="entry name" value="PRK05182.1-2"/>
    <property type="match status" value="1"/>
</dbReference>
<dbReference type="NCBIfam" id="NF003519">
    <property type="entry name" value="PRK05182.2-5"/>
    <property type="match status" value="1"/>
</dbReference>
<dbReference type="NCBIfam" id="TIGR02027">
    <property type="entry name" value="rpoA"/>
    <property type="match status" value="1"/>
</dbReference>
<dbReference type="Pfam" id="PF01000">
    <property type="entry name" value="RNA_pol_A_bac"/>
    <property type="match status" value="1"/>
</dbReference>
<dbReference type="Pfam" id="PF03118">
    <property type="entry name" value="RNA_pol_A_CTD"/>
    <property type="match status" value="1"/>
</dbReference>
<dbReference type="Pfam" id="PF01193">
    <property type="entry name" value="RNA_pol_L"/>
    <property type="match status" value="1"/>
</dbReference>
<dbReference type="SMART" id="SM00662">
    <property type="entry name" value="RPOLD"/>
    <property type="match status" value="1"/>
</dbReference>
<dbReference type="SUPFAM" id="SSF47789">
    <property type="entry name" value="C-terminal domain of RNA polymerase alpha subunit"/>
    <property type="match status" value="1"/>
</dbReference>
<dbReference type="SUPFAM" id="SSF56553">
    <property type="entry name" value="Insert subdomain of RNA polymerase alpha subunit"/>
    <property type="match status" value="1"/>
</dbReference>
<dbReference type="SUPFAM" id="SSF55257">
    <property type="entry name" value="RBP11-like subunits of RNA polymerase"/>
    <property type="match status" value="1"/>
</dbReference>